<gene>
    <name type="primary">POA1</name>
    <name type="ORF">PICST_49619</name>
</gene>
<organism>
    <name type="scientific">Scheffersomyces stipitis (strain ATCC 58785 / CBS 6054 / NBRC 10063 / NRRL Y-11545)</name>
    <name type="common">Yeast</name>
    <name type="synonym">Pichia stipitis</name>
    <dbReference type="NCBI Taxonomy" id="322104"/>
    <lineage>
        <taxon>Eukaryota</taxon>
        <taxon>Fungi</taxon>
        <taxon>Dikarya</taxon>
        <taxon>Ascomycota</taxon>
        <taxon>Saccharomycotina</taxon>
        <taxon>Pichiomycetes</taxon>
        <taxon>Debaryomycetaceae</taxon>
        <taxon>Scheffersomyces</taxon>
    </lineage>
</organism>
<evidence type="ECO:0000250" key="1"/>
<evidence type="ECO:0000255" key="2">
    <source>
        <dbReference type="PROSITE-ProRule" id="PRU00490"/>
    </source>
</evidence>
<evidence type="ECO:0000305" key="3"/>
<dbReference type="EC" id="3.1.3.84"/>
<dbReference type="EMBL" id="CP000501">
    <property type="protein sequence ID" value="ABN68136.2"/>
    <property type="molecule type" value="Genomic_DNA"/>
</dbReference>
<dbReference type="RefSeq" id="XP_001386165.2">
    <property type="nucleotide sequence ID" value="XM_001386128.1"/>
</dbReference>
<dbReference type="SMR" id="A3LZD1"/>
<dbReference type="FunCoup" id="A3LZD1">
    <property type="interactions" value="6"/>
</dbReference>
<dbReference type="GeneID" id="4840631"/>
<dbReference type="KEGG" id="pic:PICST_49619"/>
<dbReference type="eggNOG" id="ENOG502S60W">
    <property type="taxonomic scope" value="Eukaryota"/>
</dbReference>
<dbReference type="HOGENOM" id="CLU_054419_1_2_1"/>
<dbReference type="InParanoid" id="A3LZD1"/>
<dbReference type="OMA" id="HATNCIA"/>
<dbReference type="OrthoDB" id="2155246at2759"/>
<dbReference type="Proteomes" id="UP000002258">
    <property type="component" value="Chromosome 7"/>
</dbReference>
<dbReference type="GO" id="GO:0047407">
    <property type="term" value="F:ADP-ribosyl-[dinitrogen reductase] hydrolase activity"/>
    <property type="evidence" value="ECO:0007669"/>
    <property type="project" value="EnsemblFungi"/>
</dbReference>
<dbReference type="GO" id="GO:0004721">
    <property type="term" value="F:phosphoprotein phosphatase activity"/>
    <property type="evidence" value="ECO:0007669"/>
    <property type="project" value="UniProtKB-KW"/>
</dbReference>
<dbReference type="GO" id="GO:0140291">
    <property type="term" value="P:peptidyl-glutamate ADP-deribosylation"/>
    <property type="evidence" value="ECO:0007669"/>
    <property type="project" value="TreeGrafter"/>
</dbReference>
<dbReference type="CDD" id="cd02901">
    <property type="entry name" value="Macro_Poa1p-like"/>
    <property type="match status" value="1"/>
</dbReference>
<dbReference type="Gene3D" id="3.40.220.10">
    <property type="entry name" value="Leucine Aminopeptidase, subunit E, domain 1"/>
    <property type="match status" value="1"/>
</dbReference>
<dbReference type="InterPro" id="IPR050892">
    <property type="entry name" value="ADP-ribose_metab_enzymes"/>
</dbReference>
<dbReference type="InterPro" id="IPR002589">
    <property type="entry name" value="Macro_dom"/>
</dbReference>
<dbReference type="InterPro" id="IPR043472">
    <property type="entry name" value="Macro_dom-like"/>
</dbReference>
<dbReference type="PANTHER" id="PTHR12521:SF0">
    <property type="entry name" value="ADP-RIBOSE GLYCOHYDROLASE OARD1"/>
    <property type="match status" value="1"/>
</dbReference>
<dbReference type="PANTHER" id="PTHR12521">
    <property type="entry name" value="PROTEIN C6ORF130"/>
    <property type="match status" value="1"/>
</dbReference>
<dbReference type="Pfam" id="PF01661">
    <property type="entry name" value="Macro"/>
    <property type="match status" value="1"/>
</dbReference>
<dbReference type="SMART" id="SM00506">
    <property type="entry name" value="A1pp"/>
    <property type="match status" value="1"/>
</dbReference>
<dbReference type="SUPFAM" id="SSF52949">
    <property type="entry name" value="Macro domain-like"/>
    <property type="match status" value="1"/>
</dbReference>
<dbReference type="PROSITE" id="PS51154">
    <property type="entry name" value="MACRO"/>
    <property type="match status" value="1"/>
</dbReference>
<proteinExistence type="inferred from homology"/>
<feature type="chain" id="PRO_0000324912" description="ADP-ribose 1''-phosphate phosphatase">
    <location>
        <begin position="1"/>
        <end position="173"/>
    </location>
</feature>
<feature type="domain" description="Macro" evidence="2">
    <location>
        <begin position="1"/>
        <end position="173"/>
    </location>
</feature>
<feature type="binding site" evidence="1">
    <location>
        <begin position="7"/>
        <end position="9"/>
    </location>
    <ligand>
        <name>substrate</name>
    </ligand>
</feature>
<feature type="binding site" evidence="1">
    <location>
        <begin position="26"/>
        <end position="28"/>
    </location>
    <ligand>
        <name>substrate</name>
    </ligand>
</feature>
<feature type="binding site" evidence="1">
    <location>
        <begin position="33"/>
        <end position="38"/>
    </location>
    <ligand>
        <name>substrate</name>
    </ligand>
</feature>
<feature type="binding site" evidence="1">
    <location>
        <begin position="145"/>
        <end position="151"/>
    </location>
    <ligand>
        <name>substrate</name>
    </ligand>
</feature>
<protein>
    <recommendedName>
        <fullName>ADP-ribose 1''-phosphate phosphatase</fullName>
        <ecNumber>3.1.3.84</ecNumber>
    </recommendedName>
</protein>
<accession>A3LZD1</accession>
<sequence length="173" mass="18749">MIRYIKGDLLGHLPPSKSSVAVFAHACNCQGVWGGGIAAVLRVKFPSTYPLYSGHCQEKGCDPHRLLGTSVVVPSQASDPGNIAGYPPKYIACLFTSDFAQTQEEIVAYTDSAIEALVDQLKELQKTTAIETGQSGKIVVNMPKINAGIFAVPWEKTEAVLKKYDVEFNVYVI</sequence>
<name>POA1_PICST</name>
<reference key="1">
    <citation type="journal article" date="2007" name="Nat. Biotechnol.">
        <title>Genome sequence of the lignocellulose-bioconverting and xylose-fermenting yeast Pichia stipitis.</title>
        <authorList>
            <person name="Jeffries T.W."/>
            <person name="Grigoriev I.V."/>
            <person name="Grimwood J."/>
            <person name="Laplaza J.M."/>
            <person name="Aerts A."/>
            <person name="Salamov A."/>
            <person name="Schmutz J."/>
            <person name="Lindquist E."/>
            <person name="Dehal P."/>
            <person name="Shapiro H."/>
            <person name="Jin Y.-S."/>
            <person name="Passoth V."/>
            <person name="Richardson P.M."/>
        </authorList>
    </citation>
    <scope>NUCLEOTIDE SEQUENCE [LARGE SCALE GENOMIC DNA]</scope>
    <source>
        <strain>ATCC 58785 / CBS 6054 / NBRC 10063 / NRRL Y-11545</strain>
    </source>
</reference>
<comment type="function">
    <text evidence="1">Highly specific phosphatase involved in the metabolism of ADP-ribose 1''-phosphate (Appr1p) which is produced as a consequence of tRNA splicing.</text>
</comment>
<comment type="catalytic activity">
    <reaction>
        <text>ADP-alpha-D-ribose 1''-phosphate + H2O = ADP-D-ribose + phosphate</text>
        <dbReference type="Rhea" id="RHEA:25029"/>
        <dbReference type="ChEBI" id="CHEBI:15377"/>
        <dbReference type="ChEBI" id="CHEBI:43474"/>
        <dbReference type="ChEBI" id="CHEBI:57967"/>
        <dbReference type="ChEBI" id="CHEBI:58753"/>
        <dbReference type="EC" id="3.1.3.84"/>
    </reaction>
</comment>
<comment type="similarity">
    <text evidence="3">Belongs to the POA1 family.</text>
</comment>
<keyword id="KW-0378">Hydrolase</keyword>
<keyword id="KW-0904">Protein phosphatase</keyword>
<keyword id="KW-1185">Reference proteome</keyword>